<proteinExistence type="inferred from homology"/>
<keyword id="KW-0227">DNA damage</keyword>
<keyword id="KW-0233">DNA recombination</keyword>
<keyword id="KW-0234">DNA repair</keyword>
<keyword id="KW-0479">Metal-binding</keyword>
<keyword id="KW-1185">Reference proteome</keyword>
<keyword id="KW-0862">Zinc</keyword>
<keyword id="KW-0863">Zinc-finger</keyword>
<comment type="function">
    <text evidence="1">May play a role in DNA repair. It seems to be involved in an RecBC-independent recombinational process of DNA repair. It may act with RecF and RecO.</text>
</comment>
<comment type="similarity">
    <text evidence="1">Belongs to the RecR family.</text>
</comment>
<accession>Q73MF9</accession>
<organism>
    <name type="scientific">Treponema denticola (strain ATCC 35405 / DSM 14222 / CIP 103919 / JCM 8153 / KCTC 15104)</name>
    <dbReference type="NCBI Taxonomy" id="243275"/>
    <lineage>
        <taxon>Bacteria</taxon>
        <taxon>Pseudomonadati</taxon>
        <taxon>Spirochaetota</taxon>
        <taxon>Spirochaetia</taxon>
        <taxon>Spirochaetales</taxon>
        <taxon>Treponemataceae</taxon>
        <taxon>Treponema</taxon>
    </lineage>
</organism>
<evidence type="ECO:0000255" key="1">
    <source>
        <dbReference type="HAMAP-Rule" id="MF_00017"/>
    </source>
</evidence>
<name>RECR_TREDE</name>
<dbReference type="EMBL" id="AE017226">
    <property type="protein sequence ID" value="AAS12066.1"/>
    <property type="molecule type" value="Genomic_DNA"/>
</dbReference>
<dbReference type="RefSeq" id="NP_972155.1">
    <property type="nucleotide sequence ID" value="NC_002967.9"/>
</dbReference>
<dbReference type="RefSeq" id="WP_010956990.1">
    <property type="nucleotide sequence ID" value="NC_002967.9"/>
</dbReference>
<dbReference type="SMR" id="Q73MF9"/>
<dbReference type="STRING" id="243275.TDE_1549"/>
<dbReference type="PaxDb" id="243275-TDE_1549"/>
<dbReference type="GeneID" id="2740911"/>
<dbReference type="KEGG" id="tde:TDE_1549"/>
<dbReference type="PATRIC" id="fig|243275.7.peg.1485"/>
<dbReference type="eggNOG" id="COG0353">
    <property type="taxonomic scope" value="Bacteria"/>
</dbReference>
<dbReference type="HOGENOM" id="CLU_060739_1_0_12"/>
<dbReference type="OrthoDB" id="9802672at2"/>
<dbReference type="Proteomes" id="UP000008212">
    <property type="component" value="Chromosome"/>
</dbReference>
<dbReference type="GO" id="GO:0003677">
    <property type="term" value="F:DNA binding"/>
    <property type="evidence" value="ECO:0007669"/>
    <property type="project" value="UniProtKB-UniRule"/>
</dbReference>
<dbReference type="GO" id="GO:0008270">
    <property type="term" value="F:zinc ion binding"/>
    <property type="evidence" value="ECO:0007669"/>
    <property type="project" value="UniProtKB-KW"/>
</dbReference>
<dbReference type="GO" id="GO:0006310">
    <property type="term" value="P:DNA recombination"/>
    <property type="evidence" value="ECO:0007669"/>
    <property type="project" value="UniProtKB-UniRule"/>
</dbReference>
<dbReference type="GO" id="GO:0006281">
    <property type="term" value="P:DNA repair"/>
    <property type="evidence" value="ECO:0007669"/>
    <property type="project" value="UniProtKB-UniRule"/>
</dbReference>
<dbReference type="CDD" id="cd01025">
    <property type="entry name" value="TOPRIM_recR"/>
    <property type="match status" value="1"/>
</dbReference>
<dbReference type="Gene3D" id="3.40.1360.10">
    <property type="match status" value="1"/>
</dbReference>
<dbReference type="Gene3D" id="6.10.250.240">
    <property type="match status" value="1"/>
</dbReference>
<dbReference type="Gene3D" id="1.10.8.420">
    <property type="entry name" value="RecR Domain 1"/>
    <property type="match status" value="1"/>
</dbReference>
<dbReference type="HAMAP" id="MF_00017">
    <property type="entry name" value="RecR"/>
    <property type="match status" value="1"/>
</dbReference>
<dbReference type="InterPro" id="IPR000093">
    <property type="entry name" value="DNA_Rcmb_RecR"/>
</dbReference>
<dbReference type="InterPro" id="IPR023627">
    <property type="entry name" value="Rcmb_RecR"/>
</dbReference>
<dbReference type="InterPro" id="IPR015967">
    <property type="entry name" value="Rcmb_RecR_Znf"/>
</dbReference>
<dbReference type="InterPro" id="IPR006171">
    <property type="entry name" value="TOPRIM_dom"/>
</dbReference>
<dbReference type="InterPro" id="IPR034137">
    <property type="entry name" value="TOPRIM_RecR"/>
</dbReference>
<dbReference type="NCBIfam" id="TIGR00615">
    <property type="entry name" value="recR"/>
    <property type="match status" value="1"/>
</dbReference>
<dbReference type="PANTHER" id="PTHR30446">
    <property type="entry name" value="RECOMBINATION PROTEIN RECR"/>
    <property type="match status" value="1"/>
</dbReference>
<dbReference type="PANTHER" id="PTHR30446:SF0">
    <property type="entry name" value="RECOMBINATION PROTEIN RECR"/>
    <property type="match status" value="1"/>
</dbReference>
<dbReference type="Pfam" id="PF21175">
    <property type="entry name" value="RecR_C"/>
    <property type="match status" value="1"/>
</dbReference>
<dbReference type="Pfam" id="PF21176">
    <property type="entry name" value="RecR_HhH"/>
    <property type="match status" value="1"/>
</dbReference>
<dbReference type="Pfam" id="PF02132">
    <property type="entry name" value="RecR_ZnF"/>
    <property type="match status" value="1"/>
</dbReference>
<dbReference type="Pfam" id="PF13662">
    <property type="entry name" value="Toprim_4"/>
    <property type="match status" value="1"/>
</dbReference>
<dbReference type="SMART" id="SM00493">
    <property type="entry name" value="TOPRIM"/>
    <property type="match status" value="1"/>
</dbReference>
<dbReference type="SUPFAM" id="SSF111304">
    <property type="entry name" value="Recombination protein RecR"/>
    <property type="match status" value="1"/>
</dbReference>
<dbReference type="PROSITE" id="PS01300">
    <property type="entry name" value="RECR"/>
    <property type="match status" value="1"/>
</dbReference>
<dbReference type="PROSITE" id="PS50880">
    <property type="entry name" value="TOPRIM"/>
    <property type="match status" value="1"/>
</dbReference>
<protein>
    <recommendedName>
        <fullName evidence="1">Recombination protein RecR</fullName>
    </recommendedName>
</protein>
<sequence length="195" mass="21092">MNAIDAVIDSFSRLPGIGHKSAARIAYHLLKQGPADALRLAEAVSTLHEKIHPCTICGSYTEDEICSICADETRDRATICVVGFPQDVNTISSIPEYRGLFHVLGGLIAPLEGIGPDQLHISELIRRIHEGGITEVILATNPTIEGDTTALYIQKILQDLPVNITRLASGLPVGGDLEYADRLTLARSLNGRIKF</sequence>
<reference key="1">
    <citation type="journal article" date="2004" name="Proc. Natl. Acad. Sci. U.S.A.">
        <title>Comparison of the genome of the oral pathogen Treponema denticola with other spirochete genomes.</title>
        <authorList>
            <person name="Seshadri R."/>
            <person name="Myers G.S.A."/>
            <person name="Tettelin H."/>
            <person name="Eisen J.A."/>
            <person name="Heidelberg J.F."/>
            <person name="Dodson R.J."/>
            <person name="Davidsen T.M."/>
            <person name="DeBoy R.T."/>
            <person name="Fouts D.E."/>
            <person name="Haft D.H."/>
            <person name="Selengut J."/>
            <person name="Ren Q."/>
            <person name="Brinkac L.M."/>
            <person name="Madupu R."/>
            <person name="Kolonay J.F."/>
            <person name="Durkin S.A."/>
            <person name="Daugherty S.C."/>
            <person name="Shetty J."/>
            <person name="Shvartsbeyn A."/>
            <person name="Gebregeorgis E."/>
            <person name="Geer K."/>
            <person name="Tsegaye G."/>
            <person name="Malek J.A."/>
            <person name="Ayodeji B."/>
            <person name="Shatsman S."/>
            <person name="McLeod M.P."/>
            <person name="Smajs D."/>
            <person name="Howell J.K."/>
            <person name="Pal S."/>
            <person name="Amin A."/>
            <person name="Vashisth P."/>
            <person name="McNeill T.Z."/>
            <person name="Xiang Q."/>
            <person name="Sodergren E."/>
            <person name="Baca E."/>
            <person name="Weinstock G.M."/>
            <person name="Norris S.J."/>
            <person name="Fraser C.M."/>
            <person name="Paulsen I.T."/>
        </authorList>
    </citation>
    <scope>NUCLEOTIDE SEQUENCE [LARGE SCALE GENOMIC DNA]</scope>
    <source>
        <strain>ATCC 35405 / DSM 14222 / CIP 103919 / JCM 8153 / KCTC 15104</strain>
    </source>
</reference>
<feature type="chain" id="PRO_0000190415" description="Recombination protein RecR">
    <location>
        <begin position="1"/>
        <end position="195"/>
    </location>
</feature>
<feature type="domain" description="Toprim" evidence="1">
    <location>
        <begin position="77"/>
        <end position="172"/>
    </location>
</feature>
<feature type="zinc finger region" description="C4-type" evidence="1">
    <location>
        <begin position="54"/>
        <end position="69"/>
    </location>
</feature>
<gene>
    <name evidence="1" type="primary">recR</name>
    <name type="ordered locus">TDE_1549</name>
</gene>